<protein>
    <recommendedName>
        <fullName>Uncharacterized protein HI_1421</fullName>
    </recommendedName>
</protein>
<proteinExistence type="predicted"/>
<organism>
    <name type="scientific">Haemophilus influenzae (strain ATCC 51907 / DSM 11121 / KW20 / Rd)</name>
    <dbReference type="NCBI Taxonomy" id="71421"/>
    <lineage>
        <taxon>Bacteria</taxon>
        <taxon>Pseudomonadati</taxon>
        <taxon>Pseudomonadota</taxon>
        <taxon>Gammaproteobacteria</taxon>
        <taxon>Pasteurellales</taxon>
        <taxon>Pasteurellaceae</taxon>
        <taxon>Haemophilus</taxon>
    </lineage>
</organism>
<feature type="chain" id="PRO_0000078056" description="Uncharacterized protein HI_1421">
    <location>
        <begin position="1"/>
        <end position="92"/>
    </location>
</feature>
<reference key="1">
    <citation type="journal article" date="1995" name="Science">
        <title>Whole-genome random sequencing and assembly of Haemophilus influenzae Rd.</title>
        <authorList>
            <person name="Fleischmann R.D."/>
            <person name="Adams M.D."/>
            <person name="White O."/>
            <person name="Clayton R.A."/>
            <person name="Kirkness E.F."/>
            <person name="Kerlavage A.R."/>
            <person name="Bult C.J."/>
            <person name="Tomb J.-F."/>
            <person name="Dougherty B.A."/>
            <person name="Merrick J.M."/>
            <person name="McKenney K."/>
            <person name="Sutton G.G."/>
            <person name="FitzHugh W."/>
            <person name="Fields C.A."/>
            <person name="Gocayne J.D."/>
            <person name="Scott J.D."/>
            <person name="Shirley R."/>
            <person name="Liu L.-I."/>
            <person name="Glodek A."/>
            <person name="Kelley J.M."/>
            <person name="Weidman J.F."/>
            <person name="Phillips C.A."/>
            <person name="Spriggs T."/>
            <person name="Hedblom E."/>
            <person name="Cotton M.D."/>
            <person name="Utterback T.R."/>
            <person name="Hanna M.C."/>
            <person name="Nguyen D.T."/>
            <person name="Saudek D.M."/>
            <person name="Brandon R.C."/>
            <person name="Fine L.D."/>
            <person name="Fritchman J.L."/>
            <person name="Fuhrmann J.L."/>
            <person name="Geoghagen N.S.M."/>
            <person name="Gnehm C.L."/>
            <person name="McDonald L.A."/>
            <person name="Small K.V."/>
            <person name="Fraser C.M."/>
            <person name="Smith H.O."/>
            <person name="Venter J.C."/>
        </authorList>
    </citation>
    <scope>NUCLEOTIDE SEQUENCE [LARGE SCALE GENOMIC DNA]</scope>
    <source>
        <strain>ATCC 51907 / DSM 11121 / KW20 / Rd</strain>
    </source>
</reference>
<sequence>MKCDARYAEKYRMRPISDELGMEIDGYLGVIRKVTPELYDVFVLTYIKRWEKQGIWRYLHISRREYFNRLKTVKTSLLLLLSTEGKQYLFIA</sequence>
<keyword id="KW-1185">Reference proteome</keyword>
<dbReference type="EMBL" id="L42023">
    <property type="protein sequence ID" value="AAC23071.1"/>
    <property type="molecule type" value="Genomic_DNA"/>
</dbReference>
<dbReference type="PIR" id="D64029">
    <property type="entry name" value="D64029"/>
</dbReference>
<dbReference type="SMR" id="P44192"/>
<dbReference type="EnsemblBacteria" id="AAC23071">
    <property type="protein sequence ID" value="AAC23071"/>
    <property type="gene ID" value="HI_1421"/>
</dbReference>
<dbReference type="KEGG" id="hin:HI_1421"/>
<dbReference type="HOGENOM" id="CLU_156491_0_0_6"/>
<dbReference type="Proteomes" id="UP000000579">
    <property type="component" value="Chromosome"/>
</dbReference>
<gene>
    <name type="ordered locus">HI_1421</name>
</gene>
<name>Y1421_HAEIN</name>
<accession>P44192</accession>